<proteinExistence type="evidence at transcript level"/>
<feature type="signal peptide" evidence="3">
    <location>
        <begin position="1"/>
        <end position="55"/>
    </location>
</feature>
<feature type="chain" id="PRO_0000437270" description="Probable lysophospholipase BODYGUARD 3">
    <location>
        <begin position="56"/>
        <end position="498"/>
    </location>
</feature>
<feature type="domain" description="AB hydrolase-1" evidence="3">
    <location>
        <begin position="220"/>
        <end position="326"/>
    </location>
</feature>
<feature type="active site" evidence="3">
    <location>
        <position position="224"/>
    </location>
</feature>
<feature type="active site" description="Nucleophile" evidence="1">
    <location>
        <position position="297"/>
    </location>
</feature>
<feature type="active site" description="Charge relay system" evidence="1">
    <location>
        <position position="446"/>
    </location>
</feature>
<feature type="active site" description="Charge relay system" evidence="1">
    <location>
        <position position="474"/>
    </location>
</feature>
<feature type="lipid moiety-binding region" description="N-palmitoyl cysteine" evidence="4">
    <location>
        <position position="56"/>
    </location>
</feature>
<evidence type="ECO:0000250" key="1">
    <source>
        <dbReference type="UniProtKB" id="P04180"/>
    </source>
</evidence>
<evidence type="ECO:0000250" key="2">
    <source>
        <dbReference type="UniProtKB" id="Q8LFX7"/>
    </source>
</evidence>
<evidence type="ECO:0000255" key="3"/>
<evidence type="ECO:0000255" key="4">
    <source>
        <dbReference type="PROSITE-ProRule" id="PRU00303"/>
    </source>
</evidence>
<evidence type="ECO:0000303" key="5">
    <source>
    </source>
</evidence>
<evidence type="ECO:0000305" key="6"/>
<evidence type="ECO:0000312" key="7">
    <source>
        <dbReference type="Araport" id="AT4G24140"/>
    </source>
</evidence>
<evidence type="ECO:0000312" key="8">
    <source>
        <dbReference type="EMBL" id="AAB63611.1"/>
    </source>
</evidence>
<reference key="1">
    <citation type="journal article" date="1999" name="Nature">
        <title>Sequence and analysis of chromosome 4 of the plant Arabidopsis thaliana.</title>
        <authorList>
            <person name="Mayer K.F.X."/>
            <person name="Schueller C."/>
            <person name="Wambutt R."/>
            <person name="Murphy G."/>
            <person name="Volckaert G."/>
            <person name="Pohl T."/>
            <person name="Duesterhoeft A."/>
            <person name="Stiekema W."/>
            <person name="Entian K.-D."/>
            <person name="Terryn N."/>
            <person name="Harris B."/>
            <person name="Ansorge W."/>
            <person name="Brandt P."/>
            <person name="Grivell L.A."/>
            <person name="Rieger M."/>
            <person name="Weichselgartner M."/>
            <person name="de Simone V."/>
            <person name="Obermaier B."/>
            <person name="Mache R."/>
            <person name="Mueller M."/>
            <person name="Kreis M."/>
            <person name="Delseny M."/>
            <person name="Puigdomenech P."/>
            <person name="Watson M."/>
            <person name="Schmidtheini T."/>
            <person name="Reichert B."/>
            <person name="Portetelle D."/>
            <person name="Perez-Alonso M."/>
            <person name="Boutry M."/>
            <person name="Bancroft I."/>
            <person name="Vos P."/>
            <person name="Hoheisel J."/>
            <person name="Zimmermann W."/>
            <person name="Wedler H."/>
            <person name="Ridley P."/>
            <person name="Langham S.-A."/>
            <person name="McCullagh B."/>
            <person name="Bilham L."/>
            <person name="Robben J."/>
            <person name="van der Schueren J."/>
            <person name="Grymonprez B."/>
            <person name="Chuang Y.-J."/>
            <person name="Vandenbussche F."/>
            <person name="Braeken M."/>
            <person name="Weltjens I."/>
            <person name="Voet M."/>
            <person name="Bastiaens I."/>
            <person name="Aert R."/>
            <person name="Defoor E."/>
            <person name="Weitzenegger T."/>
            <person name="Bothe G."/>
            <person name="Ramsperger U."/>
            <person name="Hilbert H."/>
            <person name="Braun M."/>
            <person name="Holzer E."/>
            <person name="Brandt A."/>
            <person name="Peters S."/>
            <person name="van Staveren M."/>
            <person name="Dirkse W."/>
            <person name="Mooijman P."/>
            <person name="Klein Lankhorst R."/>
            <person name="Rose M."/>
            <person name="Hauf J."/>
            <person name="Koetter P."/>
            <person name="Berneiser S."/>
            <person name="Hempel S."/>
            <person name="Feldpausch M."/>
            <person name="Lamberth S."/>
            <person name="Van den Daele H."/>
            <person name="De Keyser A."/>
            <person name="Buysshaert C."/>
            <person name="Gielen J."/>
            <person name="Villarroel R."/>
            <person name="De Clercq R."/>
            <person name="van Montagu M."/>
            <person name="Rogers J."/>
            <person name="Cronin A."/>
            <person name="Quail M.A."/>
            <person name="Bray-Allen S."/>
            <person name="Clark L."/>
            <person name="Doggett J."/>
            <person name="Hall S."/>
            <person name="Kay M."/>
            <person name="Lennard N."/>
            <person name="McLay K."/>
            <person name="Mayes R."/>
            <person name="Pettett A."/>
            <person name="Rajandream M.A."/>
            <person name="Lyne M."/>
            <person name="Benes V."/>
            <person name="Rechmann S."/>
            <person name="Borkova D."/>
            <person name="Bloecker H."/>
            <person name="Scharfe M."/>
            <person name="Grimm M."/>
            <person name="Loehnert T.-H."/>
            <person name="Dose S."/>
            <person name="de Haan M."/>
            <person name="Maarse A.C."/>
            <person name="Schaefer M."/>
            <person name="Mueller-Auer S."/>
            <person name="Gabel C."/>
            <person name="Fuchs M."/>
            <person name="Fartmann B."/>
            <person name="Granderath K."/>
            <person name="Dauner D."/>
            <person name="Herzl A."/>
            <person name="Neumann S."/>
            <person name="Argiriou A."/>
            <person name="Vitale D."/>
            <person name="Liguori R."/>
            <person name="Piravandi E."/>
            <person name="Massenet O."/>
            <person name="Quigley F."/>
            <person name="Clabauld G."/>
            <person name="Muendlein A."/>
            <person name="Felber R."/>
            <person name="Schnabl S."/>
            <person name="Hiller R."/>
            <person name="Schmidt W."/>
            <person name="Lecharny A."/>
            <person name="Aubourg S."/>
            <person name="Chefdor F."/>
            <person name="Cooke R."/>
            <person name="Berger C."/>
            <person name="Monfort A."/>
            <person name="Casacuberta E."/>
            <person name="Gibbons T."/>
            <person name="Weber N."/>
            <person name="Vandenbol M."/>
            <person name="Bargues M."/>
            <person name="Terol J."/>
            <person name="Torres A."/>
            <person name="Perez-Perez A."/>
            <person name="Purnelle B."/>
            <person name="Bent E."/>
            <person name="Johnson S."/>
            <person name="Tacon D."/>
            <person name="Jesse T."/>
            <person name="Heijnen L."/>
            <person name="Schwarz S."/>
            <person name="Scholler P."/>
            <person name="Heber S."/>
            <person name="Francs P."/>
            <person name="Bielke C."/>
            <person name="Frishman D."/>
            <person name="Haase D."/>
            <person name="Lemcke K."/>
            <person name="Mewes H.-W."/>
            <person name="Stocker S."/>
            <person name="Zaccaria P."/>
            <person name="Bevan M."/>
            <person name="Wilson R.K."/>
            <person name="de la Bastide M."/>
            <person name="Habermann K."/>
            <person name="Parnell L."/>
            <person name="Dedhia N."/>
            <person name="Gnoj L."/>
            <person name="Schutz K."/>
            <person name="Huang E."/>
            <person name="Spiegel L."/>
            <person name="Sekhon M."/>
            <person name="Murray J."/>
            <person name="Sheet P."/>
            <person name="Cordes M."/>
            <person name="Abu-Threideh J."/>
            <person name="Stoneking T."/>
            <person name="Kalicki J."/>
            <person name="Graves T."/>
            <person name="Harmon G."/>
            <person name="Edwards J."/>
            <person name="Latreille P."/>
            <person name="Courtney L."/>
            <person name="Cloud J."/>
            <person name="Abbott A."/>
            <person name="Scott K."/>
            <person name="Johnson D."/>
            <person name="Minx P."/>
            <person name="Bentley D."/>
            <person name="Fulton B."/>
            <person name="Miller N."/>
            <person name="Greco T."/>
            <person name="Kemp K."/>
            <person name="Kramer J."/>
            <person name="Fulton L."/>
            <person name="Mardis E."/>
            <person name="Dante M."/>
            <person name="Pepin K."/>
            <person name="Hillier L.W."/>
            <person name="Nelson J."/>
            <person name="Spieth J."/>
            <person name="Ryan E."/>
            <person name="Andrews S."/>
            <person name="Geisel C."/>
            <person name="Layman D."/>
            <person name="Du H."/>
            <person name="Ali J."/>
            <person name="Berghoff A."/>
            <person name="Jones K."/>
            <person name="Drone K."/>
            <person name="Cotton M."/>
            <person name="Joshu C."/>
            <person name="Antonoiu B."/>
            <person name="Zidanic M."/>
            <person name="Strong C."/>
            <person name="Sun H."/>
            <person name="Lamar B."/>
            <person name="Yordan C."/>
            <person name="Ma P."/>
            <person name="Zhong J."/>
            <person name="Preston R."/>
            <person name="Vil D."/>
            <person name="Shekher M."/>
            <person name="Matero A."/>
            <person name="Shah R."/>
            <person name="Swaby I.K."/>
            <person name="O'Shaughnessy A."/>
            <person name="Rodriguez M."/>
            <person name="Hoffman J."/>
            <person name="Till S."/>
            <person name="Granat S."/>
            <person name="Shohdy N."/>
            <person name="Hasegawa A."/>
            <person name="Hameed A."/>
            <person name="Lodhi M."/>
            <person name="Johnson A."/>
            <person name="Chen E."/>
            <person name="Marra M.A."/>
            <person name="Martienssen R."/>
            <person name="McCombie W.R."/>
        </authorList>
    </citation>
    <scope>NUCLEOTIDE SEQUENCE [LARGE SCALE GENOMIC DNA]</scope>
    <source>
        <strain>cv. Columbia</strain>
    </source>
</reference>
<reference key="2">
    <citation type="journal article" date="2017" name="Plant J.">
        <title>Araport11: a complete reannotation of the Arabidopsis thaliana reference genome.</title>
        <authorList>
            <person name="Cheng C.Y."/>
            <person name="Krishnakumar V."/>
            <person name="Chan A.P."/>
            <person name="Thibaud-Nissen F."/>
            <person name="Schobel S."/>
            <person name="Town C.D."/>
        </authorList>
    </citation>
    <scope>GENOME REANNOTATION</scope>
    <source>
        <strain>cv. Columbia</strain>
    </source>
</reference>
<reference key="3">
    <citation type="journal article" date="2003" name="Science">
        <title>Empirical analysis of transcriptional activity in the Arabidopsis genome.</title>
        <authorList>
            <person name="Yamada K."/>
            <person name="Lim J."/>
            <person name="Dale J.M."/>
            <person name="Chen H."/>
            <person name="Shinn P."/>
            <person name="Palm C.J."/>
            <person name="Southwick A.M."/>
            <person name="Wu H.C."/>
            <person name="Kim C.J."/>
            <person name="Nguyen M."/>
            <person name="Pham P.K."/>
            <person name="Cheuk R.F."/>
            <person name="Karlin-Newmann G."/>
            <person name="Liu S.X."/>
            <person name="Lam B."/>
            <person name="Sakano H."/>
            <person name="Wu T."/>
            <person name="Yu G."/>
            <person name="Miranda M."/>
            <person name="Quach H.L."/>
            <person name="Tripp M."/>
            <person name="Chang C.H."/>
            <person name="Lee J.M."/>
            <person name="Toriumi M.J."/>
            <person name="Chan M.M."/>
            <person name="Tang C.C."/>
            <person name="Onodera C.S."/>
            <person name="Deng J.M."/>
            <person name="Akiyama K."/>
            <person name="Ansari Y."/>
            <person name="Arakawa T."/>
            <person name="Banh J."/>
            <person name="Banno F."/>
            <person name="Bowser L."/>
            <person name="Brooks S.Y."/>
            <person name="Carninci P."/>
            <person name="Chao Q."/>
            <person name="Choy N."/>
            <person name="Enju A."/>
            <person name="Goldsmith A.D."/>
            <person name="Gurjal M."/>
            <person name="Hansen N.F."/>
            <person name="Hayashizaki Y."/>
            <person name="Johnson-Hopson C."/>
            <person name="Hsuan V.W."/>
            <person name="Iida K."/>
            <person name="Karnes M."/>
            <person name="Khan S."/>
            <person name="Koesema E."/>
            <person name="Ishida J."/>
            <person name="Jiang P.X."/>
            <person name="Jones T."/>
            <person name="Kawai J."/>
            <person name="Kamiya A."/>
            <person name="Meyers C."/>
            <person name="Nakajima M."/>
            <person name="Narusaka M."/>
            <person name="Seki M."/>
            <person name="Sakurai T."/>
            <person name="Satou M."/>
            <person name="Tamse R."/>
            <person name="Vaysberg M."/>
            <person name="Wallender E.K."/>
            <person name="Wong C."/>
            <person name="Yamamura Y."/>
            <person name="Yuan S."/>
            <person name="Shinozaki K."/>
            <person name="Davis R.W."/>
            <person name="Theologis A."/>
            <person name="Ecker J.R."/>
        </authorList>
    </citation>
    <scope>NUCLEOTIDE SEQUENCE [LARGE SCALE MRNA]</scope>
    <source>
        <strain>cv. Columbia</strain>
    </source>
</reference>
<reference key="4">
    <citation type="journal article" date="2006" name="Plant Cell">
        <title>The epidermis-specific extracellular BODYGUARD controls cuticle development and morphogenesis in Arabidopsis.</title>
        <authorList>
            <person name="Kurdyukov S."/>
            <person name="Faust A."/>
            <person name="Nawrath C."/>
            <person name="Baer S."/>
            <person name="Voisin D."/>
            <person name="Efremova N."/>
            <person name="Franke R."/>
            <person name="Schreiber L."/>
            <person name="Saedler H."/>
            <person name="Metraux J.-P."/>
            <person name="Yephremov A."/>
        </authorList>
    </citation>
    <scope>GENE FAMILY</scope>
    <scope>NOMENCLATURE</scope>
    <source>
        <strain>cv. Columbia</strain>
    </source>
</reference>
<reference key="5">
    <citation type="journal article" date="2013" name="Arabidopsis Book">
        <title>Acyl-lipid metabolism.</title>
        <authorList>
            <person name="Li-Beisson Y."/>
            <person name="Shorrosh B."/>
            <person name="Beisson F."/>
            <person name="Andersson M.X."/>
            <person name="Arondel V."/>
            <person name="Bates P.D."/>
            <person name="Baud S."/>
            <person name="Bird D."/>
            <person name="Debono A."/>
            <person name="Durrett T.P."/>
            <person name="Franke R.B."/>
            <person name="Graham I.A."/>
            <person name="Katayama K."/>
            <person name="Kelly A.A."/>
            <person name="Larson T."/>
            <person name="Markham J.E."/>
            <person name="Miquel M."/>
            <person name="Molina I."/>
            <person name="Nishida I."/>
            <person name="Rowland O."/>
            <person name="Samuels L."/>
            <person name="Schmid K.M."/>
            <person name="Wada H."/>
            <person name="Welti R."/>
            <person name="Xu C."/>
            <person name="Zallot R."/>
            <person name="Ohlrogge J."/>
        </authorList>
    </citation>
    <scope>REVIEW</scope>
</reference>
<keyword id="KW-1003">Cell membrane</keyword>
<keyword id="KW-0134">Cell wall</keyword>
<keyword id="KW-0961">Cell wall biogenesis/degradation</keyword>
<keyword id="KW-0378">Hydrolase</keyword>
<keyword id="KW-0449">Lipoprotein</keyword>
<keyword id="KW-0472">Membrane</keyword>
<keyword id="KW-0564">Palmitate</keyword>
<keyword id="KW-1185">Reference proteome</keyword>
<keyword id="KW-0964">Secreted</keyword>
<keyword id="KW-0732">Signal</keyword>
<dbReference type="EC" id="3.1.1.-" evidence="6"/>
<dbReference type="EMBL" id="AC002343">
    <property type="protein sequence ID" value="AAB63611.1"/>
    <property type="molecule type" value="Genomic_DNA"/>
</dbReference>
<dbReference type="EMBL" id="AL109619">
    <property type="protein sequence ID" value="CAB51657.1"/>
    <property type="molecule type" value="Genomic_DNA"/>
</dbReference>
<dbReference type="EMBL" id="AL161560">
    <property type="protein sequence ID" value="CAB81332.1"/>
    <property type="molecule type" value="Genomic_DNA"/>
</dbReference>
<dbReference type="EMBL" id="CP002687">
    <property type="protein sequence ID" value="AEE84854.1"/>
    <property type="molecule type" value="Genomic_DNA"/>
</dbReference>
<dbReference type="EMBL" id="AY090352">
    <property type="protein sequence ID" value="AAL91257.1"/>
    <property type="molecule type" value="mRNA"/>
</dbReference>
<dbReference type="EMBL" id="BT002263">
    <property type="protein sequence ID" value="AAN72274.1"/>
    <property type="molecule type" value="mRNA"/>
</dbReference>
<dbReference type="PIR" id="T13462">
    <property type="entry name" value="T13462"/>
</dbReference>
<dbReference type="RefSeq" id="NP_194145.1">
    <property type="nucleotide sequence ID" value="NM_118546.4"/>
</dbReference>
<dbReference type="SMR" id="O22977"/>
<dbReference type="FunCoup" id="O22977">
    <property type="interactions" value="2"/>
</dbReference>
<dbReference type="STRING" id="3702.O22977"/>
<dbReference type="ESTHER" id="arath-T19F06.6">
    <property type="family name" value="Bodyguard"/>
</dbReference>
<dbReference type="MEROPS" id="S33.A26"/>
<dbReference type="PaxDb" id="3702-AT4G24140.1"/>
<dbReference type="ProteomicsDB" id="240618"/>
<dbReference type="EnsemblPlants" id="AT4G24140.1">
    <property type="protein sequence ID" value="AT4G24140.1"/>
    <property type="gene ID" value="AT4G24140"/>
</dbReference>
<dbReference type="GeneID" id="828514"/>
<dbReference type="Gramene" id="AT4G24140.1">
    <property type="protein sequence ID" value="AT4G24140.1"/>
    <property type="gene ID" value="AT4G24140"/>
</dbReference>
<dbReference type="KEGG" id="ath:AT4G24140"/>
<dbReference type="Araport" id="AT4G24140"/>
<dbReference type="TAIR" id="AT4G24140"/>
<dbReference type="eggNOG" id="KOG1454">
    <property type="taxonomic scope" value="Eukaryota"/>
</dbReference>
<dbReference type="HOGENOM" id="CLU_051935_0_0_1"/>
<dbReference type="InParanoid" id="O22977"/>
<dbReference type="OMA" id="IWKTSSC"/>
<dbReference type="OrthoDB" id="284184at2759"/>
<dbReference type="PhylomeDB" id="O22977"/>
<dbReference type="PRO" id="PR:O22977"/>
<dbReference type="Proteomes" id="UP000006548">
    <property type="component" value="Chromosome 4"/>
</dbReference>
<dbReference type="ExpressionAtlas" id="O22977">
    <property type="expression patterns" value="baseline and differential"/>
</dbReference>
<dbReference type="GO" id="GO:0005576">
    <property type="term" value="C:extracellular region"/>
    <property type="evidence" value="ECO:0007669"/>
    <property type="project" value="UniProtKB-KW"/>
</dbReference>
<dbReference type="GO" id="GO:0005886">
    <property type="term" value="C:plasma membrane"/>
    <property type="evidence" value="ECO:0007669"/>
    <property type="project" value="UniProtKB-SubCell"/>
</dbReference>
<dbReference type="GO" id="GO:0016787">
    <property type="term" value="F:hydrolase activity"/>
    <property type="evidence" value="ECO:0007669"/>
    <property type="project" value="UniProtKB-KW"/>
</dbReference>
<dbReference type="GO" id="GO:0071555">
    <property type="term" value="P:cell wall organization"/>
    <property type="evidence" value="ECO:0007669"/>
    <property type="project" value="UniProtKB-KW"/>
</dbReference>
<dbReference type="Gene3D" id="3.40.50.1820">
    <property type="entry name" value="alpha/beta hydrolase"/>
    <property type="match status" value="1"/>
</dbReference>
<dbReference type="InterPro" id="IPR000073">
    <property type="entry name" value="AB_hydrolase_1"/>
</dbReference>
<dbReference type="InterPro" id="IPR029058">
    <property type="entry name" value="AB_hydrolase_fold"/>
</dbReference>
<dbReference type="PANTHER" id="PTHR43689">
    <property type="entry name" value="HYDROLASE"/>
    <property type="match status" value="1"/>
</dbReference>
<dbReference type="PANTHER" id="PTHR43689:SF9">
    <property type="entry name" value="LYSOPHOSPHOLIPASE BODYGUARD 3-RELATED"/>
    <property type="match status" value="1"/>
</dbReference>
<dbReference type="Pfam" id="PF00561">
    <property type="entry name" value="Abhydrolase_1"/>
    <property type="match status" value="1"/>
</dbReference>
<dbReference type="SUPFAM" id="SSF53474">
    <property type="entry name" value="alpha/beta-Hydrolases"/>
    <property type="match status" value="1"/>
</dbReference>
<protein>
    <recommendedName>
        <fullName evidence="5">Probable lysophospholipase BODYGUARD 3</fullName>
        <shortName evidence="5">AtBDG3</shortName>
        <ecNumber evidence="6">3.1.1.-</ecNumber>
    </recommendedName>
</protein>
<accession>O22977</accession>
<gene>
    <name evidence="5" type="primary">BDG3</name>
    <name evidence="7" type="ordered locus">At4g24140</name>
    <name evidence="8" type="ORF">T19F6.6</name>
</gene>
<organism>
    <name type="scientific">Arabidopsis thaliana</name>
    <name type="common">Mouse-ear cress</name>
    <dbReference type="NCBI Taxonomy" id="3702"/>
    <lineage>
        <taxon>Eukaryota</taxon>
        <taxon>Viridiplantae</taxon>
        <taxon>Streptophyta</taxon>
        <taxon>Embryophyta</taxon>
        <taxon>Tracheophyta</taxon>
        <taxon>Spermatophyta</taxon>
        <taxon>Magnoliopsida</taxon>
        <taxon>eudicotyledons</taxon>
        <taxon>Gunneridae</taxon>
        <taxon>Pentapetalae</taxon>
        <taxon>rosids</taxon>
        <taxon>malvids</taxon>
        <taxon>Brassicales</taxon>
        <taxon>Brassicaceae</taxon>
        <taxon>Camelineae</taxon>
        <taxon>Arabidopsis</taxon>
    </lineage>
</organism>
<sequence>MAVMKIKGAATVAGTWLNEAVSFVVFCILDIVDSFLCLLYKAADYLFEAEWKPCYCLSDKEPITTTRGKILLSHNNGESKILTLSPLQELGGRSKIELEDISETLYTRPSLISDISTISVNELNKRFVKVTRSESECSGHNEKTKNKRRRSLTKSSLTVNFTVVEMLRGKIRPQNLNHDISRWSDCDCGFCTSWASTSDKNHSLFVKTQIPNGVTAKEDVLFIHGFISSSAFWTETVFPSLSASSSTHRLFAVDLLGFGKSPKPADSLYTLREHVEMIEKSVLHKYNVKSFHIVAHSLGCILALSLAARHGGLIKSLTLLAPPYYPVPKGEKKPRQYVMKKVAPRKVWPPIALGASMACWYEHISRTICLLICKHHRVWQFIAGVLTRNNRTVNFLIEGFMCHTHNAAWHTLHNIICGTGSKLDTYLDIVRDKLKCNVTIFHGGDDELIPVECSYNVKQRIPRARVKVIEHKDHITMVVGRQDEFARELQEIWKTSSC</sequence>
<comment type="function">
    <text evidence="2">Involved in cuticle development and morphogenesis.</text>
</comment>
<comment type="subcellular location">
    <subcellularLocation>
        <location evidence="3">Cell membrane</location>
        <topology evidence="3">Lipid-anchor</topology>
    </subcellularLocation>
    <subcellularLocation>
        <location evidence="2">Secreted</location>
        <location evidence="2">Cell wall</location>
    </subcellularLocation>
</comment>
<name>BDG3_ARATH</name>